<protein>
    <recommendedName>
        <fullName evidence="1">Acetyl-coenzyme A carboxylase carboxyl transferase subunit alpha</fullName>
        <shortName evidence="1">ACCase subunit alpha</shortName>
        <shortName evidence="1">Acetyl-CoA carboxylase carboxyltransferase subunit alpha</shortName>
        <ecNumber evidence="1">2.1.3.15</ecNumber>
    </recommendedName>
</protein>
<comment type="function">
    <text evidence="1">Component of the acetyl coenzyme A carboxylase (ACC) complex. First, biotin carboxylase catalyzes the carboxylation of biotin on its carrier protein (BCCP) and then the CO(2) group is transferred by the carboxyltransferase to acetyl-CoA to form malonyl-CoA.</text>
</comment>
<comment type="catalytic activity">
    <reaction evidence="1">
        <text>N(6)-carboxybiotinyl-L-lysyl-[protein] + acetyl-CoA = N(6)-biotinyl-L-lysyl-[protein] + malonyl-CoA</text>
        <dbReference type="Rhea" id="RHEA:54728"/>
        <dbReference type="Rhea" id="RHEA-COMP:10505"/>
        <dbReference type="Rhea" id="RHEA-COMP:10506"/>
        <dbReference type="ChEBI" id="CHEBI:57288"/>
        <dbReference type="ChEBI" id="CHEBI:57384"/>
        <dbReference type="ChEBI" id="CHEBI:83144"/>
        <dbReference type="ChEBI" id="CHEBI:83145"/>
        <dbReference type="EC" id="2.1.3.15"/>
    </reaction>
</comment>
<comment type="pathway">
    <text evidence="1">Lipid metabolism; malonyl-CoA biosynthesis; malonyl-CoA from acetyl-CoA: step 1/1.</text>
</comment>
<comment type="subunit">
    <text evidence="1">Acetyl-CoA carboxylase is a heterohexamer composed of biotin carboxyl carrier protein (AccB), biotin carboxylase (AccC) and two subunits each of ACCase subunit alpha (AccA) and ACCase subunit beta (AccD).</text>
</comment>
<comment type="subcellular location">
    <subcellularLocation>
        <location evidence="1">Cytoplasm</location>
    </subcellularLocation>
</comment>
<comment type="similarity">
    <text evidence="1">Belongs to the AccA family.</text>
</comment>
<accession>B1XD54</accession>
<reference key="1">
    <citation type="journal article" date="2008" name="J. Bacteriol.">
        <title>The complete genome sequence of Escherichia coli DH10B: insights into the biology of a laboratory workhorse.</title>
        <authorList>
            <person name="Durfee T."/>
            <person name="Nelson R."/>
            <person name="Baldwin S."/>
            <person name="Plunkett G. III"/>
            <person name="Burland V."/>
            <person name="Mau B."/>
            <person name="Petrosino J.F."/>
            <person name="Qin X."/>
            <person name="Muzny D.M."/>
            <person name="Ayele M."/>
            <person name="Gibbs R.A."/>
            <person name="Csorgo B."/>
            <person name="Posfai G."/>
            <person name="Weinstock G.M."/>
            <person name="Blattner F.R."/>
        </authorList>
    </citation>
    <scope>NUCLEOTIDE SEQUENCE [LARGE SCALE GENOMIC DNA]</scope>
    <source>
        <strain>K12 / DH10B</strain>
    </source>
</reference>
<name>ACCA_ECODH</name>
<keyword id="KW-0067">ATP-binding</keyword>
<keyword id="KW-0963">Cytoplasm</keyword>
<keyword id="KW-0275">Fatty acid biosynthesis</keyword>
<keyword id="KW-0276">Fatty acid metabolism</keyword>
<keyword id="KW-0444">Lipid biosynthesis</keyword>
<keyword id="KW-0443">Lipid metabolism</keyword>
<keyword id="KW-0547">Nucleotide-binding</keyword>
<keyword id="KW-0808">Transferase</keyword>
<feature type="chain" id="PRO_1000134486" description="Acetyl-coenzyme A carboxylase carboxyl transferase subunit alpha">
    <location>
        <begin position="1"/>
        <end position="319"/>
    </location>
</feature>
<feature type="domain" description="CoA carboxyltransferase C-terminal" evidence="2">
    <location>
        <begin position="35"/>
        <end position="296"/>
    </location>
</feature>
<evidence type="ECO:0000255" key="1">
    <source>
        <dbReference type="HAMAP-Rule" id="MF_00823"/>
    </source>
</evidence>
<evidence type="ECO:0000255" key="2">
    <source>
        <dbReference type="PROSITE-ProRule" id="PRU01137"/>
    </source>
</evidence>
<organism>
    <name type="scientific">Escherichia coli (strain K12 / DH10B)</name>
    <dbReference type="NCBI Taxonomy" id="316385"/>
    <lineage>
        <taxon>Bacteria</taxon>
        <taxon>Pseudomonadati</taxon>
        <taxon>Pseudomonadota</taxon>
        <taxon>Gammaproteobacteria</taxon>
        <taxon>Enterobacterales</taxon>
        <taxon>Enterobacteriaceae</taxon>
        <taxon>Escherichia</taxon>
    </lineage>
</organism>
<sequence length="319" mass="35242">MSLNFLDFEQPIAELEAKIDSLTAVSRQDEKLDINIDEEVHRLREKSVELTRKIFADLGAWQIAQLARHPQRPYTLDYVRLAFDEFDELAGDRAYADDKAIVGGIARLDGRPVMIIGHQKGRETKEKIRRNFGMPAPEGYRKALRLMQMAERFKMPIITFIDTPGAYPGVGAEERGQSEAIARNLREMSRLGVPVVCTVIGEGGSGGALAIGVGDKVNMLQYSTYSVISPEGCASILWKSADKAPLAAEAMGIIAPRLKELKLIDSIIPEPLGGAHRNPEAMAASLKAQLLADLADLDVLSTEDLKNRRYQRLMSYGYA</sequence>
<proteinExistence type="inferred from homology"/>
<dbReference type="EC" id="2.1.3.15" evidence="1"/>
<dbReference type="EMBL" id="CP000948">
    <property type="protein sequence ID" value="ACB01363.1"/>
    <property type="molecule type" value="Genomic_DNA"/>
</dbReference>
<dbReference type="RefSeq" id="WP_000055741.1">
    <property type="nucleotide sequence ID" value="NC_010473.1"/>
</dbReference>
<dbReference type="SMR" id="B1XD54"/>
<dbReference type="GeneID" id="86945115"/>
<dbReference type="KEGG" id="ecd:ECDH10B_0165"/>
<dbReference type="HOGENOM" id="CLU_015486_0_2_6"/>
<dbReference type="UniPathway" id="UPA00655">
    <property type="reaction ID" value="UER00711"/>
</dbReference>
<dbReference type="GO" id="GO:0009317">
    <property type="term" value="C:acetyl-CoA carboxylase complex"/>
    <property type="evidence" value="ECO:0007669"/>
    <property type="project" value="InterPro"/>
</dbReference>
<dbReference type="GO" id="GO:0003989">
    <property type="term" value="F:acetyl-CoA carboxylase activity"/>
    <property type="evidence" value="ECO:0007669"/>
    <property type="project" value="InterPro"/>
</dbReference>
<dbReference type="GO" id="GO:0005524">
    <property type="term" value="F:ATP binding"/>
    <property type="evidence" value="ECO:0007669"/>
    <property type="project" value="UniProtKB-KW"/>
</dbReference>
<dbReference type="GO" id="GO:0016743">
    <property type="term" value="F:carboxyl- or carbamoyltransferase activity"/>
    <property type="evidence" value="ECO:0007669"/>
    <property type="project" value="UniProtKB-UniRule"/>
</dbReference>
<dbReference type="GO" id="GO:0006633">
    <property type="term" value="P:fatty acid biosynthetic process"/>
    <property type="evidence" value="ECO:0007669"/>
    <property type="project" value="UniProtKB-KW"/>
</dbReference>
<dbReference type="GO" id="GO:2001295">
    <property type="term" value="P:malonyl-CoA biosynthetic process"/>
    <property type="evidence" value="ECO:0007669"/>
    <property type="project" value="UniProtKB-UniRule"/>
</dbReference>
<dbReference type="FunFam" id="3.90.226.10:FF:000008">
    <property type="entry name" value="Acetyl-coenzyme A carboxylase carboxyl transferase subunit alpha"/>
    <property type="match status" value="1"/>
</dbReference>
<dbReference type="Gene3D" id="3.90.226.10">
    <property type="entry name" value="2-enoyl-CoA Hydratase, Chain A, domain 1"/>
    <property type="match status" value="1"/>
</dbReference>
<dbReference type="HAMAP" id="MF_00823">
    <property type="entry name" value="AcetylCoA_CT_alpha"/>
    <property type="match status" value="1"/>
</dbReference>
<dbReference type="InterPro" id="IPR001095">
    <property type="entry name" value="Acetyl_CoA_COase_a_su"/>
</dbReference>
<dbReference type="InterPro" id="IPR029045">
    <property type="entry name" value="ClpP/crotonase-like_dom_sf"/>
</dbReference>
<dbReference type="InterPro" id="IPR011763">
    <property type="entry name" value="COA_CT_C"/>
</dbReference>
<dbReference type="NCBIfam" id="TIGR00513">
    <property type="entry name" value="accA"/>
    <property type="match status" value="1"/>
</dbReference>
<dbReference type="NCBIfam" id="NF041504">
    <property type="entry name" value="AccA_sub"/>
    <property type="match status" value="1"/>
</dbReference>
<dbReference type="NCBIfam" id="NF004344">
    <property type="entry name" value="PRK05724.1"/>
    <property type="match status" value="1"/>
</dbReference>
<dbReference type="PANTHER" id="PTHR42853">
    <property type="entry name" value="ACETYL-COENZYME A CARBOXYLASE CARBOXYL TRANSFERASE SUBUNIT ALPHA"/>
    <property type="match status" value="1"/>
</dbReference>
<dbReference type="PANTHER" id="PTHR42853:SF3">
    <property type="entry name" value="ACETYL-COENZYME A CARBOXYLASE CARBOXYL TRANSFERASE SUBUNIT ALPHA, CHLOROPLASTIC"/>
    <property type="match status" value="1"/>
</dbReference>
<dbReference type="Pfam" id="PF03255">
    <property type="entry name" value="ACCA"/>
    <property type="match status" value="1"/>
</dbReference>
<dbReference type="PRINTS" id="PR01069">
    <property type="entry name" value="ACCCTRFRASEA"/>
</dbReference>
<dbReference type="SUPFAM" id="SSF52096">
    <property type="entry name" value="ClpP/crotonase"/>
    <property type="match status" value="1"/>
</dbReference>
<dbReference type="PROSITE" id="PS50989">
    <property type="entry name" value="COA_CT_CTER"/>
    <property type="match status" value="1"/>
</dbReference>
<gene>
    <name evidence="1" type="primary">accA</name>
    <name type="ordered locus">ECDH10B_0165</name>
</gene>